<sequence>MAKRKIVKKKVVKKNIAKGIVYISATFNNTMVTVTDEMGNAIAWSSAGGLGFKGSKKSTPYAAQQAVEDALNKAKEHGIKEVGIKVQGPGSGRETAVKSVGAMEGIKVTFLKDITPLAHNGCRPPKRRRV</sequence>
<organism>
    <name type="scientific">Campylobacter jejuni subsp. jejuni serotype O:23/36 (strain 81-176)</name>
    <dbReference type="NCBI Taxonomy" id="354242"/>
    <lineage>
        <taxon>Bacteria</taxon>
        <taxon>Pseudomonadati</taxon>
        <taxon>Campylobacterota</taxon>
        <taxon>Epsilonproteobacteria</taxon>
        <taxon>Campylobacterales</taxon>
        <taxon>Campylobacteraceae</taxon>
        <taxon>Campylobacter</taxon>
    </lineage>
</organism>
<evidence type="ECO:0000255" key="1">
    <source>
        <dbReference type="HAMAP-Rule" id="MF_01310"/>
    </source>
</evidence>
<evidence type="ECO:0000305" key="2"/>
<keyword id="KW-0687">Ribonucleoprotein</keyword>
<keyword id="KW-0689">Ribosomal protein</keyword>
<keyword id="KW-0694">RNA-binding</keyword>
<keyword id="KW-0699">rRNA-binding</keyword>
<protein>
    <recommendedName>
        <fullName evidence="1">Small ribosomal subunit protein uS11</fullName>
    </recommendedName>
    <alternativeName>
        <fullName evidence="2">30S ribosomal protein S11</fullName>
    </alternativeName>
</protein>
<proteinExistence type="inferred from homology"/>
<gene>
    <name evidence="1" type="primary">rpsK</name>
    <name type="ordered locus">CJJ81176_1580</name>
</gene>
<reference key="1">
    <citation type="submission" date="2006-12" db="EMBL/GenBank/DDBJ databases">
        <authorList>
            <person name="Fouts D.E."/>
            <person name="Nelson K.E."/>
            <person name="Sebastian Y."/>
        </authorList>
    </citation>
    <scope>NUCLEOTIDE SEQUENCE [LARGE SCALE GENOMIC DNA]</scope>
    <source>
        <strain>81-176</strain>
    </source>
</reference>
<dbReference type="EMBL" id="CP000538">
    <property type="protein sequence ID" value="EAQ72660.1"/>
    <property type="molecule type" value="Genomic_DNA"/>
</dbReference>
<dbReference type="RefSeq" id="WP_002779544.1">
    <property type="nucleotide sequence ID" value="NC_008787.1"/>
</dbReference>
<dbReference type="SMR" id="A1W1J5"/>
<dbReference type="GeneID" id="98394728"/>
<dbReference type="KEGG" id="cjj:CJJ81176_1580"/>
<dbReference type="eggNOG" id="COG0100">
    <property type="taxonomic scope" value="Bacteria"/>
</dbReference>
<dbReference type="HOGENOM" id="CLU_072439_5_0_7"/>
<dbReference type="Proteomes" id="UP000000646">
    <property type="component" value="Chromosome"/>
</dbReference>
<dbReference type="GO" id="GO:1990904">
    <property type="term" value="C:ribonucleoprotein complex"/>
    <property type="evidence" value="ECO:0007669"/>
    <property type="project" value="UniProtKB-KW"/>
</dbReference>
<dbReference type="GO" id="GO:0005840">
    <property type="term" value="C:ribosome"/>
    <property type="evidence" value="ECO:0007669"/>
    <property type="project" value="UniProtKB-KW"/>
</dbReference>
<dbReference type="GO" id="GO:0019843">
    <property type="term" value="F:rRNA binding"/>
    <property type="evidence" value="ECO:0007669"/>
    <property type="project" value="UniProtKB-UniRule"/>
</dbReference>
<dbReference type="GO" id="GO:0003735">
    <property type="term" value="F:structural constituent of ribosome"/>
    <property type="evidence" value="ECO:0007669"/>
    <property type="project" value="InterPro"/>
</dbReference>
<dbReference type="GO" id="GO:0006412">
    <property type="term" value="P:translation"/>
    <property type="evidence" value="ECO:0007669"/>
    <property type="project" value="UniProtKB-UniRule"/>
</dbReference>
<dbReference type="FunFam" id="3.30.420.80:FF:000001">
    <property type="entry name" value="30S ribosomal protein S11"/>
    <property type="match status" value="1"/>
</dbReference>
<dbReference type="Gene3D" id="3.30.420.80">
    <property type="entry name" value="Ribosomal protein S11"/>
    <property type="match status" value="1"/>
</dbReference>
<dbReference type="HAMAP" id="MF_01310">
    <property type="entry name" value="Ribosomal_uS11"/>
    <property type="match status" value="1"/>
</dbReference>
<dbReference type="InterPro" id="IPR001971">
    <property type="entry name" value="Ribosomal_uS11"/>
</dbReference>
<dbReference type="InterPro" id="IPR019981">
    <property type="entry name" value="Ribosomal_uS11_bac-type"/>
</dbReference>
<dbReference type="InterPro" id="IPR018102">
    <property type="entry name" value="Ribosomal_uS11_CS"/>
</dbReference>
<dbReference type="InterPro" id="IPR036967">
    <property type="entry name" value="Ribosomal_uS11_sf"/>
</dbReference>
<dbReference type="NCBIfam" id="NF003698">
    <property type="entry name" value="PRK05309.1"/>
    <property type="match status" value="1"/>
</dbReference>
<dbReference type="NCBIfam" id="TIGR03632">
    <property type="entry name" value="uS11_bact"/>
    <property type="match status" value="1"/>
</dbReference>
<dbReference type="PANTHER" id="PTHR11759">
    <property type="entry name" value="40S RIBOSOMAL PROTEIN S14/30S RIBOSOMAL PROTEIN S11"/>
    <property type="match status" value="1"/>
</dbReference>
<dbReference type="Pfam" id="PF00411">
    <property type="entry name" value="Ribosomal_S11"/>
    <property type="match status" value="1"/>
</dbReference>
<dbReference type="PIRSF" id="PIRSF002131">
    <property type="entry name" value="Ribosomal_S11"/>
    <property type="match status" value="1"/>
</dbReference>
<dbReference type="SUPFAM" id="SSF53137">
    <property type="entry name" value="Translational machinery components"/>
    <property type="match status" value="1"/>
</dbReference>
<dbReference type="PROSITE" id="PS00054">
    <property type="entry name" value="RIBOSOMAL_S11"/>
    <property type="match status" value="1"/>
</dbReference>
<comment type="function">
    <text evidence="1">Located on the platform of the 30S subunit, it bridges several disparate RNA helices of the 16S rRNA. Forms part of the Shine-Dalgarno cleft in the 70S ribosome.</text>
</comment>
<comment type="subunit">
    <text evidence="1">Part of the 30S ribosomal subunit. Interacts with proteins S7 and S18. Binds to IF-3.</text>
</comment>
<comment type="similarity">
    <text evidence="1">Belongs to the universal ribosomal protein uS11 family.</text>
</comment>
<name>RS11_CAMJJ</name>
<feature type="chain" id="PRO_0000294733" description="Small ribosomal subunit protein uS11">
    <location>
        <begin position="1"/>
        <end position="130"/>
    </location>
</feature>
<accession>A1W1J5</accession>